<reference key="1">
    <citation type="journal article" date="2009" name="PLoS Genet.">
        <title>Organised genome dynamics in the Escherichia coli species results in highly diverse adaptive paths.</title>
        <authorList>
            <person name="Touchon M."/>
            <person name="Hoede C."/>
            <person name="Tenaillon O."/>
            <person name="Barbe V."/>
            <person name="Baeriswyl S."/>
            <person name="Bidet P."/>
            <person name="Bingen E."/>
            <person name="Bonacorsi S."/>
            <person name="Bouchier C."/>
            <person name="Bouvet O."/>
            <person name="Calteau A."/>
            <person name="Chiapello H."/>
            <person name="Clermont O."/>
            <person name="Cruveiller S."/>
            <person name="Danchin A."/>
            <person name="Diard M."/>
            <person name="Dossat C."/>
            <person name="Karoui M.E."/>
            <person name="Frapy E."/>
            <person name="Garry L."/>
            <person name="Ghigo J.M."/>
            <person name="Gilles A.M."/>
            <person name="Johnson J."/>
            <person name="Le Bouguenec C."/>
            <person name="Lescat M."/>
            <person name="Mangenot S."/>
            <person name="Martinez-Jehanne V."/>
            <person name="Matic I."/>
            <person name="Nassif X."/>
            <person name="Oztas S."/>
            <person name="Petit M.A."/>
            <person name="Pichon C."/>
            <person name="Rouy Z."/>
            <person name="Ruf C.S."/>
            <person name="Schneider D."/>
            <person name="Tourret J."/>
            <person name="Vacherie B."/>
            <person name="Vallenet D."/>
            <person name="Medigue C."/>
            <person name="Rocha E.P.C."/>
            <person name="Denamur E."/>
        </authorList>
    </citation>
    <scope>NUCLEOTIDE SEQUENCE [LARGE SCALE GENOMIC DNA]</scope>
    <source>
        <strain>ATCC 35469 / DSM 13698 / BCRC 15582 / CCUG 18766 / IAM 14443 / JCM 21226 / LMG 7866 / NBRC 102419 / NCTC 12128 / CDC 0568-73</strain>
    </source>
</reference>
<gene>
    <name evidence="1" type="primary">glpG</name>
    <name type="ordered locus">EFER_3392</name>
</gene>
<protein>
    <recommendedName>
        <fullName evidence="1">Rhomboid protease GlpG</fullName>
        <ecNumber evidence="1">3.4.21.105</ecNumber>
    </recommendedName>
    <alternativeName>
        <fullName evidence="1">Intramembrane serine protease</fullName>
    </alternativeName>
</protein>
<feature type="chain" id="PRO_1000147860" description="Rhomboid protease GlpG">
    <location>
        <begin position="1"/>
        <end position="276"/>
    </location>
</feature>
<feature type="transmembrane region" description="Helical" evidence="1">
    <location>
        <begin position="94"/>
        <end position="114"/>
    </location>
</feature>
<feature type="transmembrane region" description="Helical" evidence="1">
    <location>
        <begin position="142"/>
        <end position="162"/>
    </location>
</feature>
<feature type="transmembrane region" description="Helical" evidence="1">
    <location>
        <begin position="169"/>
        <end position="189"/>
    </location>
</feature>
<feature type="transmembrane region" description="Helical" evidence="1">
    <location>
        <begin position="192"/>
        <end position="212"/>
    </location>
</feature>
<feature type="transmembrane region" description="Helical" evidence="1">
    <location>
        <begin position="229"/>
        <end position="249"/>
    </location>
</feature>
<feature type="transmembrane region" description="Helical" evidence="1">
    <location>
        <begin position="250"/>
        <end position="270"/>
    </location>
</feature>
<feature type="active site" description="Nucleophile" evidence="1">
    <location>
        <position position="201"/>
    </location>
</feature>
<feature type="active site" evidence="1">
    <location>
        <position position="254"/>
    </location>
</feature>
<sequence length="276" mass="31308">MLMITSFANPRVAQAFVDYMATQGVILTIQQHNQSDVWLADESLAERVRSELARFLENPADPRYLAASWQAGHTGSGLHYRRYPFFAALRERAGPVTWVMMIACVVVFIAMQILGDQEVMLWLAWPFDPTLKFEFWRYFTHALMHFSLMHILFNLLWWWYLGGAVEKRLGSGKLIVITLISALLSGYVQQKFSGPWFGGLSGVVYALMGYVWLRGERDPQSGIYLQRGLIIFALIWIVAGWFDLFGMSMANGAHIAGLAVGLAMAFVDSLNARKRK</sequence>
<proteinExistence type="inferred from homology"/>
<accession>B7LSC6</accession>
<organism>
    <name type="scientific">Escherichia fergusonii (strain ATCC 35469 / DSM 13698 / CCUG 18766 / IAM 14443 / JCM 21226 / LMG 7866 / NBRC 102419 / NCTC 12128 / CDC 0568-73)</name>
    <dbReference type="NCBI Taxonomy" id="585054"/>
    <lineage>
        <taxon>Bacteria</taxon>
        <taxon>Pseudomonadati</taxon>
        <taxon>Pseudomonadota</taxon>
        <taxon>Gammaproteobacteria</taxon>
        <taxon>Enterobacterales</taxon>
        <taxon>Enterobacteriaceae</taxon>
        <taxon>Escherichia</taxon>
    </lineage>
</organism>
<dbReference type="EC" id="3.4.21.105" evidence="1"/>
<dbReference type="EMBL" id="CU928158">
    <property type="protein sequence ID" value="CAQ90869.1"/>
    <property type="molecule type" value="Genomic_DNA"/>
</dbReference>
<dbReference type="RefSeq" id="WP_000928711.1">
    <property type="nucleotide sequence ID" value="NC_011740.1"/>
</dbReference>
<dbReference type="SMR" id="B7LSC6"/>
<dbReference type="MEROPS" id="S54.016"/>
<dbReference type="GeneID" id="75060000"/>
<dbReference type="KEGG" id="efe:EFER_3392"/>
<dbReference type="HOGENOM" id="CLU_058989_0_0_6"/>
<dbReference type="OrthoDB" id="9778341at2"/>
<dbReference type="Proteomes" id="UP000000745">
    <property type="component" value="Chromosome"/>
</dbReference>
<dbReference type="GO" id="GO:0005886">
    <property type="term" value="C:plasma membrane"/>
    <property type="evidence" value="ECO:0007669"/>
    <property type="project" value="UniProtKB-SubCell"/>
</dbReference>
<dbReference type="GO" id="GO:0004252">
    <property type="term" value="F:serine-type endopeptidase activity"/>
    <property type="evidence" value="ECO:0007669"/>
    <property type="project" value="UniProtKB-UniRule"/>
</dbReference>
<dbReference type="GO" id="GO:0006508">
    <property type="term" value="P:proteolysis"/>
    <property type="evidence" value="ECO:0007669"/>
    <property type="project" value="UniProtKB-UniRule"/>
</dbReference>
<dbReference type="FunFam" id="1.20.1540.10:FF:000003">
    <property type="entry name" value="Rhomboid protease GlpG"/>
    <property type="match status" value="1"/>
</dbReference>
<dbReference type="FunFam" id="3.30.70.2350:FF:000001">
    <property type="entry name" value="Rhomboid protease GlpG"/>
    <property type="match status" value="1"/>
</dbReference>
<dbReference type="Gene3D" id="3.30.70.2350">
    <property type="match status" value="1"/>
</dbReference>
<dbReference type="Gene3D" id="1.20.1540.10">
    <property type="entry name" value="Rhomboid-like"/>
    <property type="match status" value="1"/>
</dbReference>
<dbReference type="HAMAP" id="MF_01594">
    <property type="entry name" value="Rhomboid_GlpG"/>
    <property type="match status" value="1"/>
</dbReference>
<dbReference type="InterPro" id="IPR038236">
    <property type="entry name" value="GlpG_N_sf"/>
</dbReference>
<dbReference type="InterPro" id="IPR022732">
    <property type="entry name" value="Peptidase_S54_GlpG_N"/>
</dbReference>
<dbReference type="InterPro" id="IPR022764">
    <property type="entry name" value="Peptidase_S54_rhomboid_dom"/>
</dbReference>
<dbReference type="InterPro" id="IPR035952">
    <property type="entry name" value="Rhomboid-like_sf"/>
</dbReference>
<dbReference type="InterPro" id="IPR023662">
    <property type="entry name" value="Rhomboid_protease_GlpG"/>
</dbReference>
<dbReference type="NCBIfam" id="NF008155">
    <property type="entry name" value="PRK10907.1"/>
    <property type="match status" value="1"/>
</dbReference>
<dbReference type="NCBIfam" id="TIGR04239">
    <property type="entry name" value="rhombo_GlpG"/>
    <property type="match status" value="1"/>
</dbReference>
<dbReference type="PANTHER" id="PTHR43066:SF26">
    <property type="entry name" value="RHOMBOID PROTEASE GLPG"/>
    <property type="match status" value="1"/>
</dbReference>
<dbReference type="PANTHER" id="PTHR43066">
    <property type="entry name" value="RHOMBOID-RELATED PROTEIN"/>
    <property type="match status" value="1"/>
</dbReference>
<dbReference type="Pfam" id="PF01694">
    <property type="entry name" value="Rhomboid"/>
    <property type="match status" value="1"/>
</dbReference>
<dbReference type="Pfam" id="PF12122">
    <property type="entry name" value="Rhomboid_N"/>
    <property type="match status" value="1"/>
</dbReference>
<dbReference type="SUPFAM" id="SSF144091">
    <property type="entry name" value="Rhomboid-like"/>
    <property type="match status" value="1"/>
</dbReference>
<comment type="function">
    <text evidence="1">Rhomboid-type serine protease that catalyzes intramembrane proteolysis.</text>
</comment>
<comment type="catalytic activity">
    <reaction evidence="1">
        <text>Cleaves type-1 transmembrane domains using a catalytic dyad composed of serine and histidine that are contributed by different transmembrane domains.</text>
        <dbReference type="EC" id="3.4.21.105"/>
    </reaction>
</comment>
<comment type="subcellular location">
    <subcellularLocation>
        <location evidence="1">Cell inner membrane</location>
        <topology evidence="1">Multi-pass membrane protein</topology>
    </subcellularLocation>
</comment>
<comment type="similarity">
    <text evidence="1">Belongs to the peptidase S54 family.</text>
</comment>
<evidence type="ECO:0000255" key="1">
    <source>
        <dbReference type="HAMAP-Rule" id="MF_01594"/>
    </source>
</evidence>
<name>GLPG_ESCF3</name>
<keyword id="KW-0997">Cell inner membrane</keyword>
<keyword id="KW-1003">Cell membrane</keyword>
<keyword id="KW-0378">Hydrolase</keyword>
<keyword id="KW-0472">Membrane</keyword>
<keyword id="KW-0645">Protease</keyword>
<keyword id="KW-0720">Serine protease</keyword>
<keyword id="KW-0812">Transmembrane</keyword>
<keyword id="KW-1133">Transmembrane helix</keyword>